<keyword id="KW-0472">Membrane</keyword>
<keyword id="KW-0520">NAD</keyword>
<keyword id="KW-0521">NADP</keyword>
<keyword id="KW-0618">Plastoquinone</keyword>
<keyword id="KW-0874">Quinone</keyword>
<keyword id="KW-0793">Thylakoid</keyword>
<keyword id="KW-1278">Translocase</keyword>
<keyword id="KW-0812">Transmembrane</keyword>
<keyword id="KW-1133">Transmembrane helix</keyword>
<comment type="function">
    <text evidence="1">NDH-1 shuttles electrons from an unknown electron donor, via FMN and iron-sulfur (Fe-S) centers, to quinones in the respiratory and/or the photosynthetic chain. The immediate electron acceptor for the enzyme in this species is believed to be plastoquinone. Couples the redox reaction to proton translocation, and thus conserves the redox energy in a proton gradient.</text>
</comment>
<comment type="catalytic activity">
    <reaction evidence="1">
        <text>a plastoquinone + NADH + (n+1) H(+)(in) = a plastoquinol + NAD(+) + n H(+)(out)</text>
        <dbReference type="Rhea" id="RHEA:42608"/>
        <dbReference type="Rhea" id="RHEA-COMP:9561"/>
        <dbReference type="Rhea" id="RHEA-COMP:9562"/>
        <dbReference type="ChEBI" id="CHEBI:15378"/>
        <dbReference type="ChEBI" id="CHEBI:17757"/>
        <dbReference type="ChEBI" id="CHEBI:57540"/>
        <dbReference type="ChEBI" id="CHEBI:57945"/>
        <dbReference type="ChEBI" id="CHEBI:62192"/>
    </reaction>
</comment>
<comment type="catalytic activity">
    <reaction evidence="1">
        <text>a plastoquinone + NADPH + (n+1) H(+)(in) = a plastoquinol + NADP(+) + n H(+)(out)</text>
        <dbReference type="Rhea" id="RHEA:42612"/>
        <dbReference type="Rhea" id="RHEA-COMP:9561"/>
        <dbReference type="Rhea" id="RHEA-COMP:9562"/>
        <dbReference type="ChEBI" id="CHEBI:15378"/>
        <dbReference type="ChEBI" id="CHEBI:17757"/>
        <dbReference type="ChEBI" id="CHEBI:57783"/>
        <dbReference type="ChEBI" id="CHEBI:58349"/>
        <dbReference type="ChEBI" id="CHEBI:62192"/>
    </reaction>
</comment>
<comment type="subunit">
    <text evidence="1">NDH-1 is composed of at least 11 different subunits.</text>
</comment>
<comment type="subcellular location">
    <subcellularLocation>
        <location evidence="1">Cellular thylakoid membrane</location>
        <topology evidence="1">Multi-pass membrane protein</topology>
    </subcellularLocation>
</comment>
<comment type="similarity">
    <text evidence="1">Belongs to the complex I subunit 1 family.</text>
</comment>
<name>NU1C_MICAN</name>
<gene>
    <name evidence="1" type="primary">ndhA</name>
    <name type="ordered locus">MAE_56450</name>
</gene>
<evidence type="ECO:0000255" key="1">
    <source>
        <dbReference type="HAMAP-Rule" id="MF_01350"/>
    </source>
</evidence>
<feature type="chain" id="PRO_1000143607" description="NAD(P)H-quinone oxidoreductase subunit 1">
    <location>
        <begin position="1"/>
        <end position="372"/>
    </location>
</feature>
<feature type="transmembrane region" description="Helical" evidence="1">
    <location>
        <begin position="27"/>
        <end position="47"/>
    </location>
</feature>
<feature type="transmembrane region" description="Helical" evidence="1">
    <location>
        <begin position="97"/>
        <end position="117"/>
    </location>
</feature>
<feature type="transmembrane region" description="Helical" evidence="1">
    <location>
        <begin position="130"/>
        <end position="150"/>
    </location>
</feature>
<feature type="transmembrane region" description="Helical" evidence="1">
    <location>
        <begin position="176"/>
        <end position="196"/>
    </location>
</feature>
<feature type="transmembrane region" description="Helical" evidence="1">
    <location>
        <begin position="204"/>
        <end position="224"/>
    </location>
</feature>
<feature type="transmembrane region" description="Helical" evidence="1">
    <location>
        <begin position="254"/>
        <end position="274"/>
    </location>
</feature>
<feature type="transmembrane region" description="Helical" evidence="1">
    <location>
        <begin position="308"/>
        <end position="328"/>
    </location>
</feature>
<feature type="transmembrane region" description="Helical" evidence="1">
    <location>
        <begin position="351"/>
        <end position="371"/>
    </location>
</feature>
<proteinExistence type="inferred from homology"/>
<organism>
    <name type="scientific">Microcystis aeruginosa (strain NIES-843 / IAM M-2473)</name>
    <dbReference type="NCBI Taxonomy" id="449447"/>
    <lineage>
        <taxon>Bacteria</taxon>
        <taxon>Bacillati</taxon>
        <taxon>Cyanobacteriota</taxon>
        <taxon>Cyanophyceae</taxon>
        <taxon>Oscillatoriophycideae</taxon>
        <taxon>Chroococcales</taxon>
        <taxon>Microcystaceae</taxon>
        <taxon>Microcystis</taxon>
    </lineage>
</organism>
<sequence length="372" mass="40677">MNQGIDLQESFIKSLTDLGLSGGLAKAIWMPLPMFLMIIAATVGVLVCVWLERKISAAVQQRIGPEYAGPLGVLQPVADGLKLVFKEDVVPAKADPWLFLFGPILVVMPVFVSYLIVPFGQNLLITDLNVGIFLWISLSSIAPIGLLMAGYASNNKYSLLGGLRAAAQSISYEIPLALSVLAIVMMSNSLSTIDIVEQQSGYGILGWNIWRQPVGFLIFWIAALAECERLPFDLPEAEEELVAGYQTEYAGMKFALFYVGSYVNLVLSALVFAVLYLGGWEFPIPVNALAGWLGVSETNPWLQIITASLGITMTVLKAYFLIFIAILLRWTVPRVRIDQLLDLGWKFLLPVSLVNLLLTAALKLAFPFAFGG</sequence>
<reference key="1">
    <citation type="journal article" date="2007" name="DNA Res.">
        <title>Complete genomic structure of the bloom-forming toxic cyanobacterium Microcystis aeruginosa NIES-843.</title>
        <authorList>
            <person name="Kaneko T."/>
            <person name="Nakajima N."/>
            <person name="Okamoto S."/>
            <person name="Suzuki I."/>
            <person name="Tanabe Y."/>
            <person name="Tamaoki M."/>
            <person name="Nakamura Y."/>
            <person name="Kasai F."/>
            <person name="Watanabe A."/>
            <person name="Kawashima K."/>
            <person name="Kishida Y."/>
            <person name="Ono A."/>
            <person name="Shimizu Y."/>
            <person name="Takahashi C."/>
            <person name="Minami C."/>
            <person name="Fujishiro T."/>
            <person name="Kohara M."/>
            <person name="Katoh M."/>
            <person name="Nakazaki N."/>
            <person name="Nakayama S."/>
            <person name="Yamada M."/>
            <person name="Tabata S."/>
            <person name="Watanabe M.M."/>
        </authorList>
    </citation>
    <scope>NUCLEOTIDE SEQUENCE [LARGE SCALE GENOMIC DNA]</scope>
    <source>
        <strain>NIES-843 / IAM M-247</strain>
    </source>
</reference>
<accession>B0JHQ5</accession>
<dbReference type="EC" id="7.1.1.-" evidence="1"/>
<dbReference type="EMBL" id="AP009552">
    <property type="protein sequence ID" value="BAG05467.1"/>
    <property type="molecule type" value="Genomic_DNA"/>
</dbReference>
<dbReference type="SMR" id="B0JHQ5"/>
<dbReference type="STRING" id="449447.MAE_56450"/>
<dbReference type="PaxDb" id="449447-MAE_56450"/>
<dbReference type="EnsemblBacteria" id="BAG05467">
    <property type="protein sequence ID" value="BAG05467"/>
    <property type="gene ID" value="MAE_56450"/>
</dbReference>
<dbReference type="KEGG" id="mar:MAE_56450"/>
<dbReference type="eggNOG" id="COG1005">
    <property type="taxonomic scope" value="Bacteria"/>
</dbReference>
<dbReference type="HOGENOM" id="CLU_015134_0_1_3"/>
<dbReference type="BioCyc" id="MAER449447:MAE_RS24585-MONOMER"/>
<dbReference type="Proteomes" id="UP000001510">
    <property type="component" value="Chromosome"/>
</dbReference>
<dbReference type="GO" id="GO:0031676">
    <property type="term" value="C:plasma membrane-derived thylakoid membrane"/>
    <property type="evidence" value="ECO:0007669"/>
    <property type="project" value="UniProtKB-SubCell"/>
</dbReference>
<dbReference type="GO" id="GO:0003954">
    <property type="term" value="F:NADH dehydrogenase activity"/>
    <property type="evidence" value="ECO:0007669"/>
    <property type="project" value="TreeGrafter"/>
</dbReference>
<dbReference type="GO" id="GO:0016655">
    <property type="term" value="F:oxidoreductase activity, acting on NAD(P)H, quinone or similar compound as acceptor"/>
    <property type="evidence" value="ECO:0007669"/>
    <property type="project" value="UniProtKB-UniRule"/>
</dbReference>
<dbReference type="GO" id="GO:0048038">
    <property type="term" value="F:quinone binding"/>
    <property type="evidence" value="ECO:0007669"/>
    <property type="project" value="UniProtKB-KW"/>
</dbReference>
<dbReference type="GO" id="GO:0009060">
    <property type="term" value="P:aerobic respiration"/>
    <property type="evidence" value="ECO:0007669"/>
    <property type="project" value="TreeGrafter"/>
</dbReference>
<dbReference type="GO" id="GO:0019684">
    <property type="term" value="P:photosynthesis, light reaction"/>
    <property type="evidence" value="ECO:0007669"/>
    <property type="project" value="UniProtKB-UniRule"/>
</dbReference>
<dbReference type="HAMAP" id="MF_01350">
    <property type="entry name" value="NDH1_NuoH"/>
    <property type="match status" value="1"/>
</dbReference>
<dbReference type="InterPro" id="IPR001694">
    <property type="entry name" value="NADH_UbQ_OxRdtase_su1/FPO"/>
</dbReference>
<dbReference type="InterPro" id="IPR018086">
    <property type="entry name" value="NADH_UbQ_OxRdtase_su1_CS"/>
</dbReference>
<dbReference type="NCBIfam" id="NF004741">
    <property type="entry name" value="PRK06076.1-2"/>
    <property type="match status" value="1"/>
</dbReference>
<dbReference type="NCBIfam" id="NF004744">
    <property type="entry name" value="PRK06076.1-5"/>
    <property type="match status" value="1"/>
</dbReference>
<dbReference type="PANTHER" id="PTHR11432">
    <property type="entry name" value="NADH DEHYDROGENASE SUBUNIT 1"/>
    <property type="match status" value="1"/>
</dbReference>
<dbReference type="PANTHER" id="PTHR11432:SF3">
    <property type="entry name" value="NADH-UBIQUINONE OXIDOREDUCTASE CHAIN 1"/>
    <property type="match status" value="1"/>
</dbReference>
<dbReference type="Pfam" id="PF00146">
    <property type="entry name" value="NADHdh"/>
    <property type="match status" value="1"/>
</dbReference>
<dbReference type="PROSITE" id="PS00667">
    <property type="entry name" value="COMPLEX1_ND1_1"/>
    <property type="match status" value="1"/>
</dbReference>
<dbReference type="PROSITE" id="PS00668">
    <property type="entry name" value="COMPLEX1_ND1_2"/>
    <property type="match status" value="1"/>
</dbReference>
<protein>
    <recommendedName>
        <fullName evidence="1">NAD(P)H-quinone oxidoreductase subunit 1</fullName>
        <ecNumber evidence="1">7.1.1.-</ecNumber>
    </recommendedName>
    <alternativeName>
        <fullName evidence="1">NAD(P)H dehydrogenase I subunit 1</fullName>
    </alternativeName>
    <alternativeName>
        <fullName evidence="1">NDH-1 subunit 1</fullName>
    </alternativeName>
    <alternativeName>
        <fullName evidence="1">NDH-A</fullName>
    </alternativeName>
</protein>